<protein>
    <recommendedName>
        <fullName>Catalase</fullName>
        <ecNumber>1.11.1.6</ecNumber>
    </recommendedName>
</protein>
<reference key="1">
    <citation type="journal article" date="1998" name="J. Bacteriol.">
        <title>The periplasmic, group III catalase of Vibrio fischeri is required for normal symbiotic competence and is induced both by oxidative stress and by approach to stationary phase.</title>
        <authorList>
            <person name="Visick K."/>
            <person name="Ruby E.G."/>
        </authorList>
    </citation>
    <scope>NUCLEOTIDE SEQUENCE [GENOMIC DNA]</scope>
</reference>
<reference key="2">
    <citation type="journal article" date="2005" name="Proc. Natl. Acad. Sci. U.S.A.">
        <title>Complete genome sequence of Vibrio fischeri: a symbiotic bacterium with pathogenic congeners.</title>
        <authorList>
            <person name="Ruby E.G."/>
            <person name="Urbanowski M."/>
            <person name="Campbell J."/>
            <person name="Dunn A."/>
            <person name="Faini M."/>
            <person name="Gunsalus R."/>
            <person name="Lostroh P."/>
            <person name="Lupp C."/>
            <person name="McCann J."/>
            <person name="Millikan D."/>
            <person name="Schaefer A."/>
            <person name="Stabb E."/>
            <person name="Stevens A."/>
            <person name="Visick K."/>
            <person name="Whistler C."/>
            <person name="Greenberg E.P."/>
        </authorList>
    </citation>
    <scope>NUCLEOTIDE SEQUENCE [LARGE SCALE GENOMIC DNA]</scope>
    <source>
        <strain>ATCC 700601 / ES114</strain>
    </source>
</reference>
<organism>
    <name type="scientific">Aliivibrio fischeri (strain ATCC 700601 / ES114)</name>
    <name type="common">Vibrio fischeri</name>
    <dbReference type="NCBI Taxonomy" id="312309"/>
    <lineage>
        <taxon>Bacteria</taxon>
        <taxon>Pseudomonadati</taxon>
        <taxon>Pseudomonadota</taxon>
        <taxon>Gammaproteobacteria</taxon>
        <taxon>Vibrionales</taxon>
        <taxon>Vibrionaceae</taxon>
        <taxon>Aliivibrio</taxon>
    </lineage>
</organism>
<proteinExistence type="evidence at transcript level"/>
<comment type="function">
    <text>Decomposes hydrogen peroxide into water and oxygen; serves to protect cells from the toxic effects of hydrogen peroxide. Could protect cells in nodules which have a high potential to produce hydrogen peroxide because of the strong reducing conditions required for nitrogen fixation and the action of several proteins.</text>
</comment>
<comment type="catalytic activity">
    <reaction evidence="2">
        <text>2 H2O2 = O2 + 2 H2O</text>
        <dbReference type="Rhea" id="RHEA:20309"/>
        <dbReference type="ChEBI" id="CHEBI:15377"/>
        <dbReference type="ChEBI" id="CHEBI:15379"/>
        <dbReference type="ChEBI" id="CHEBI:16240"/>
        <dbReference type="EC" id="1.11.1.6"/>
    </reaction>
</comment>
<comment type="cofactor">
    <cofactor>
        <name>heme</name>
        <dbReference type="ChEBI" id="CHEBI:30413"/>
    </cofactor>
</comment>
<comment type="subcellular location">
    <subcellularLocation>
        <location>Periplasm</location>
    </subcellularLocation>
</comment>
<comment type="induction">
    <text>By hydrogen peroxide.</text>
</comment>
<comment type="miscellaneous">
    <text>Either KatA or KatC is absolutely required for the protection of the nitrogen fixation process.</text>
</comment>
<comment type="similarity">
    <text evidence="3">Belongs to the catalase family.</text>
</comment>
<gene>
    <name type="primary">katA</name>
    <name type="ordered locus">VF_A0009</name>
</gene>
<feature type="chain" id="PRO_0000085012" description="Catalase">
    <location>
        <begin position="1"/>
        <end position="482"/>
    </location>
</feature>
<feature type="active site" evidence="2">
    <location>
        <position position="53"/>
    </location>
</feature>
<feature type="active site" evidence="2">
    <location>
        <position position="126"/>
    </location>
</feature>
<feature type="binding site" description="axial binding residue" evidence="1">
    <location>
        <position position="336"/>
    </location>
    <ligand>
        <name>heme</name>
        <dbReference type="ChEBI" id="CHEBI:30413"/>
    </ligand>
    <ligandPart>
        <name>Fe</name>
        <dbReference type="ChEBI" id="CHEBI:18248"/>
    </ligandPart>
</feature>
<evidence type="ECO:0000250" key="1"/>
<evidence type="ECO:0000255" key="2">
    <source>
        <dbReference type="PROSITE-ProRule" id="PRU10013"/>
    </source>
</evidence>
<evidence type="ECO:0000305" key="3"/>
<name>CATA_ALIF1</name>
<dbReference type="EC" id="1.11.1.6"/>
<dbReference type="EMBL" id="AF011784">
    <property type="protein sequence ID" value="AAC38344.1"/>
    <property type="molecule type" value="Genomic_DNA"/>
</dbReference>
<dbReference type="EMBL" id="CP000021">
    <property type="protein sequence ID" value="AAW87079.1"/>
    <property type="molecule type" value="Genomic_DNA"/>
</dbReference>
<dbReference type="RefSeq" id="WP_011262914.1">
    <property type="nucleotide sequence ID" value="NC_006841.2"/>
</dbReference>
<dbReference type="RefSeq" id="YP_205967.1">
    <property type="nucleotide sequence ID" value="NC_006841.2"/>
</dbReference>
<dbReference type="SMR" id="O68146"/>
<dbReference type="STRING" id="312309.VF_A0009"/>
<dbReference type="EnsemblBacteria" id="AAW87079">
    <property type="protein sequence ID" value="AAW87079"/>
    <property type="gene ID" value="VF_A0009"/>
</dbReference>
<dbReference type="GeneID" id="54165335"/>
<dbReference type="KEGG" id="vfi:VF_A0009"/>
<dbReference type="PATRIC" id="fig|312309.11.peg.2611"/>
<dbReference type="eggNOG" id="COG0753">
    <property type="taxonomic scope" value="Bacteria"/>
</dbReference>
<dbReference type="HOGENOM" id="CLU_010645_2_0_6"/>
<dbReference type="OrthoDB" id="9761719at2"/>
<dbReference type="Proteomes" id="UP000000537">
    <property type="component" value="Chromosome II"/>
</dbReference>
<dbReference type="GO" id="GO:0005737">
    <property type="term" value="C:cytoplasm"/>
    <property type="evidence" value="ECO:0007669"/>
    <property type="project" value="TreeGrafter"/>
</dbReference>
<dbReference type="GO" id="GO:0042597">
    <property type="term" value="C:periplasmic space"/>
    <property type="evidence" value="ECO:0007669"/>
    <property type="project" value="UniProtKB-SubCell"/>
</dbReference>
<dbReference type="GO" id="GO:0004096">
    <property type="term" value="F:catalase activity"/>
    <property type="evidence" value="ECO:0007669"/>
    <property type="project" value="UniProtKB-EC"/>
</dbReference>
<dbReference type="GO" id="GO:0020037">
    <property type="term" value="F:heme binding"/>
    <property type="evidence" value="ECO:0007669"/>
    <property type="project" value="InterPro"/>
</dbReference>
<dbReference type="GO" id="GO:0046872">
    <property type="term" value="F:metal ion binding"/>
    <property type="evidence" value="ECO:0007669"/>
    <property type="project" value="UniProtKB-KW"/>
</dbReference>
<dbReference type="GO" id="GO:0042744">
    <property type="term" value="P:hydrogen peroxide catabolic process"/>
    <property type="evidence" value="ECO:0007669"/>
    <property type="project" value="UniProtKB-KW"/>
</dbReference>
<dbReference type="GO" id="GO:0042542">
    <property type="term" value="P:response to hydrogen peroxide"/>
    <property type="evidence" value="ECO:0007669"/>
    <property type="project" value="TreeGrafter"/>
</dbReference>
<dbReference type="CDD" id="cd08156">
    <property type="entry name" value="catalase_clade_3"/>
    <property type="match status" value="1"/>
</dbReference>
<dbReference type="FunFam" id="2.40.180.10:FF:000001">
    <property type="entry name" value="Catalase"/>
    <property type="match status" value="1"/>
</dbReference>
<dbReference type="Gene3D" id="2.40.180.10">
    <property type="entry name" value="Catalase core domain"/>
    <property type="match status" value="1"/>
</dbReference>
<dbReference type="InterPro" id="IPR018028">
    <property type="entry name" value="Catalase"/>
</dbReference>
<dbReference type="InterPro" id="IPR040333">
    <property type="entry name" value="Catalase_3"/>
</dbReference>
<dbReference type="InterPro" id="IPR024708">
    <property type="entry name" value="Catalase_AS"/>
</dbReference>
<dbReference type="InterPro" id="IPR024711">
    <property type="entry name" value="Catalase_clade1/3"/>
</dbReference>
<dbReference type="InterPro" id="IPR011614">
    <property type="entry name" value="Catalase_core"/>
</dbReference>
<dbReference type="InterPro" id="IPR002226">
    <property type="entry name" value="Catalase_haem_BS"/>
</dbReference>
<dbReference type="InterPro" id="IPR010582">
    <property type="entry name" value="Catalase_immune_responsive"/>
</dbReference>
<dbReference type="InterPro" id="IPR020835">
    <property type="entry name" value="Catalase_sf"/>
</dbReference>
<dbReference type="PANTHER" id="PTHR11465">
    <property type="entry name" value="CATALASE"/>
    <property type="match status" value="1"/>
</dbReference>
<dbReference type="PANTHER" id="PTHR11465:SF61">
    <property type="entry name" value="CATALASE"/>
    <property type="match status" value="1"/>
</dbReference>
<dbReference type="Pfam" id="PF00199">
    <property type="entry name" value="Catalase"/>
    <property type="match status" value="1"/>
</dbReference>
<dbReference type="Pfam" id="PF06628">
    <property type="entry name" value="Catalase-rel"/>
    <property type="match status" value="1"/>
</dbReference>
<dbReference type="PIRSF" id="PIRSF038928">
    <property type="entry name" value="Catalase_clade1-3"/>
    <property type="match status" value="1"/>
</dbReference>
<dbReference type="PRINTS" id="PR00067">
    <property type="entry name" value="CATALASE"/>
</dbReference>
<dbReference type="SMART" id="SM01060">
    <property type="entry name" value="Catalase"/>
    <property type="match status" value="1"/>
</dbReference>
<dbReference type="SUPFAM" id="SSF56634">
    <property type="entry name" value="Heme-dependent catalase-like"/>
    <property type="match status" value="1"/>
</dbReference>
<dbReference type="PROSITE" id="PS00437">
    <property type="entry name" value="CATALASE_1"/>
    <property type="match status" value="1"/>
</dbReference>
<dbReference type="PROSITE" id="PS00438">
    <property type="entry name" value="CATALASE_2"/>
    <property type="match status" value="1"/>
</dbReference>
<dbReference type="PROSITE" id="PS51402">
    <property type="entry name" value="CATALASE_3"/>
    <property type="match status" value="1"/>
</dbReference>
<sequence length="482" mass="54864">MSKKLTTAAGCPVAHNQNVQTAGKRGPQLLQDVWFLEKLAHFDREVIPERRMHAKGSGAYGTFTVTHDITKYTKAKLFSEIGKQTELFARFTTVAGERGAADAERDIRGFALKFYTEEGNWDLVGNNTPVFFLRDPLKFPDLNHAVKRDPRTNMRSAKNNWDFWTSLPEALHQVTIVMSDRGIPATYRHMHGFGSHTFSFINSDNERFWVKFHFKSQQGIKNLSDAEAAQVIGQDRESHQRDLLESIDNQDFPKWTLKVQIMPEADAATVPYNPFDLTKVWPHKDYPLIEVGEFELNRNPQNFFAEVEQSAFNPANVVPGISFSPDKMLQGRLFAYGDAQRYRLGVNHQHIPVNAPRCPVHSYHRDGAMRVDGNFGSTLGYEPNNEGQWAEQPDFAEPALNLDGAAAHWDHREDEDYFSQPGDLFRLMTAEQQAILFDNTARNLNGVPKEIQLRHLRHCYKADPAYGEGIGKLLDIDVSEFN</sequence>
<accession>O68146</accession>
<accession>Q5E1L7</accession>
<keyword id="KW-0349">Heme</keyword>
<keyword id="KW-0376">Hydrogen peroxide</keyword>
<keyword id="KW-0408">Iron</keyword>
<keyword id="KW-0479">Metal-binding</keyword>
<keyword id="KW-0560">Oxidoreductase</keyword>
<keyword id="KW-0574">Periplasm</keyword>
<keyword id="KW-0575">Peroxidase</keyword>
<keyword id="KW-1185">Reference proteome</keyword>